<keyword id="KW-0012">Acyltransferase</keyword>
<keyword id="KW-0028">Amino-acid biosynthesis</keyword>
<keyword id="KW-0220">Diaminopimelate biosynthesis</keyword>
<keyword id="KW-0457">Lysine biosynthesis</keyword>
<keyword id="KW-0677">Repeat</keyword>
<keyword id="KW-0808">Transferase</keyword>
<organism>
    <name type="scientific">Streptococcus suis (strain 98HAH33)</name>
    <dbReference type="NCBI Taxonomy" id="391296"/>
    <lineage>
        <taxon>Bacteria</taxon>
        <taxon>Bacillati</taxon>
        <taxon>Bacillota</taxon>
        <taxon>Bacilli</taxon>
        <taxon>Lactobacillales</taxon>
        <taxon>Streptococcaceae</taxon>
        <taxon>Streptococcus</taxon>
    </lineage>
</organism>
<name>DAPH_STRS2</name>
<gene>
    <name evidence="1" type="primary">dapH</name>
    <name type="ordered locus">SSU98_2047</name>
</gene>
<dbReference type="EC" id="2.3.1.89" evidence="1"/>
<dbReference type="EMBL" id="CP000408">
    <property type="protein sequence ID" value="ABP93204.1"/>
    <property type="molecule type" value="Genomic_DNA"/>
</dbReference>
<dbReference type="SMR" id="A4W4B5"/>
<dbReference type="KEGG" id="ssv:SSU98_2047"/>
<dbReference type="HOGENOM" id="CLU_103751_0_0_9"/>
<dbReference type="UniPathway" id="UPA00034">
    <property type="reaction ID" value="UER00022"/>
</dbReference>
<dbReference type="GO" id="GO:0047200">
    <property type="term" value="F:tetrahydrodipicolinate N-acetyltransferase activity"/>
    <property type="evidence" value="ECO:0007669"/>
    <property type="project" value="UniProtKB-EC"/>
</dbReference>
<dbReference type="GO" id="GO:0019877">
    <property type="term" value="P:diaminopimelate biosynthetic process"/>
    <property type="evidence" value="ECO:0007669"/>
    <property type="project" value="UniProtKB-UniRule"/>
</dbReference>
<dbReference type="GO" id="GO:0009089">
    <property type="term" value="P:lysine biosynthetic process via diaminopimelate"/>
    <property type="evidence" value="ECO:0007669"/>
    <property type="project" value="UniProtKB-UniRule"/>
</dbReference>
<dbReference type="Gene3D" id="2.160.10.10">
    <property type="entry name" value="Hexapeptide repeat proteins"/>
    <property type="match status" value="1"/>
</dbReference>
<dbReference type="Gene3D" id="3.30.70.250">
    <property type="entry name" value="Malonyl-CoA ACP transacylase, ACP-binding"/>
    <property type="match status" value="1"/>
</dbReference>
<dbReference type="HAMAP" id="MF_01691">
    <property type="entry name" value="DapH"/>
    <property type="match status" value="1"/>
</dbReference>
<dbReference type="InterPro" id="IPR019873">
    <property type="entry name" value="DapH"/>
</dbReference>
<dbReference type="InterPro" id="IPR013710">
    <property type="entry name" value="DapH_N"/>
</dbReference>
<dbReference type="InterPro" id="IPR001451">
    <property type="entry name" value="Hexapep"/>
</dbReference>
<dbReference type="InterPro" id="IPR018357">
    <property type="entry name" value="Hexapep_transf_CS"/>
</dbReference>
<dbReference type="InterPro" id="IPR050179">
    <property type="entry name" value="Trans_hexapeptide_repeat"/>
</dbReference>
<dbReference type="InterPro" id="IPR011004">
    <property type="entry name" value="Trimer_LpxA-like_sf"/>
</dbReference>
<dbReference type="NCBIfam" id="TIGR03532">
    <property type="entry name" value="DapD_Ac"/>
    <property type="match status" value="1"/>
</dbReference>
<dbReference type="PANTHER" id="PTHR43300:SF10">
    <property type="entry name" value="2,3,4,5-TETRAHYDROPYRIDINE-2,6-DICARBOXYLATE N-ACETYLTRANSFERASE"/>
    <property type="match status" value="1"/>
</dbReference>
<dbReference type="PANTHER" id="PTHR43300">
    <property type="entry name" value="ACETYLTRANSFERASE"/>
    <property type="match status" value="1"/>
</dbReference>
<dbReference type="Pfam" id="PF08503">
    <property type="entry name" value="DapH_N"/>
    <property type="match status" value="1"/>
</dbReference>
<dbReference type="Pfam" id="PF00132">
    <property type="entry name" value="Hexapep"/>
    <property type="match status" value="1"/>
</dbReference>
<dbReference type="Pfam" id="PF14602">
    <property type="entry name" value="Hexapep_2"/>
    <property type="match status" value="2"/>
</dbReference>
<dbReference type="SUPFAM" id="SSF51161">
    <property type="entry name" value="Trimeric LpxA-like enzymes"/>
    <property type="match status" value="1"/>
</dbReference>
<dbReference type="PROSITE" id="PS00101">
    <property type="entry name" value="HEXAPEP_TRANSFERASES"/>
    <property type="match status" value="2"/>
</dbReference>
<protein>
    <recommendedName>
        <fullName evidence="1">2,3,4,5-tetrahydropyridine-2,6-dicarboxylate N-acetyltransferase</fullName>
        <ecNumber evidence="1">2.3.1.89</ecNumber>
    </recommendedName>
    <alternativeName>
        <fullName evidence="1">Tetrahydrodipicolinate N-acetyltransferase</fullName>
        <shortName evidence="1">THP acetyltransferase</shortName>
        <shortName evidence="1">Tetrahydropicolinate acetylase</shortName>
    </alternativeName>
</protein>
<feature type="chain" id="PRO_0000376718" description="2,3,4,5-tetrahydropyridine-2,6-dicarboxylate N-acetyltransferase">
    <location>
        <begin position="1"/>
        <end position="232"/>
    </location>
</feature>
<proteinExistence type="inferred from homology"/>
<sequence>MTAQKMTAQEIIAFIGNAVKKTTVKVTFEGELAGAVPAEVTKLGNVLFGDWKDVEPLLANLTENVDYVVEQDGRNSAVPLLDKRNINARIEPGAIIRDQVTIGDNAVIMMGAVINIGAEIGPGTMIDMGAILGGRATVGKNSHIGAGAVLAGVIEPASAEPVRVGDNVLVGANAVVIEGVQIGSGSVVAAGAIVTQDVPENVVVAGVPARIIKEIDAQTQQKTALEEALRTL</sequence>
<evidence type="ECO:0000255" key="1">
    <source>
        <dbReference type="HAMAP-Rule" id="MF_01691"/>
    </source>
</evidence>
<comment type="function">
    <text evidence="1">Catalyzes the transfer of an acetyl group from acetyl-CoA to tetrahydrodipicolinate.</text>
</comment>
<comment type="catalytic activity">
    <reaction evidence="1">
        <text>(S)-2,3,4,5-tetrahydrodipicolinate + acetyl-CoA + H2O = L-2-acetamido-6-oxoheptanedioate + CoA</text>
        <dbReference type="Rhea" id="RHEA:13085"/>
        <dbReference type="ChEBI" id="CHEBI:15377"/>
        <dbReference type="ChEBI" id="CHEBI:16845"/>
        <dbReference type="ChEBI" id="CHEBI:57287"/>
        <dbReference type="ChEBI" id="CHEBI:57288"/>
        <dbReference type="ChEBI" id="CHEBI:58117"/>
        <dbReference type="EC" id="2.3.1.89"/>
    </reaction>
</comment>
<comment type="pathway">
    <text evidence="1">Amino-acid biosynthesis; L-lysine biosynthesis via DAP pathway; LL-2,6-diaminopimelate from (S)-tetrahydrodipicolinate (acetylase route): step 1/3.</text>
</comment>
<comment type="similarity">
    <text evidence="1">Belongs to the transferase hexapeptide repeat family. DapH subfamily.</text>
</comment>
<reference key="1">
    <citation type="journal article" date="2007" name="PLoS ONE">
        <title>A glimpse of streptococcal toxic shock syndrome from comparative genomics of S. suis 2 Chinese isolates.</title>
        <authorList>
            <person name="Chen C."/>
            <person name="Tang J."/>
            <person name="Dong W."/>
            <person name="Wang C."/>
            <person name="Feng Y."/>
            <person name="Wang J."/>
            <person name="Zheng F."/>
            <person name="Pan X."/>
            <person name="Liu D."/>
            <person name="Li M."/>
            <person name="Song Y."/>
            <person name="Zhu X."/>
            <person name="Sun H."/>
            <person name="Feng T."/>
            <person name="Guo Z."/>
            <person name="Ju A."/>
            <person name="Ge J."/>
            <person name="Dong Y."/>
            <person name="Sun W."/>
            <person name="Jiang Y."/>
            <person name="Wang J."/>
            <person name="Yan J."/>
            <person name="Yang H."/>
            <person name="Wang X."/>
            <person name="Gao G.F."/>
            <person name="Yang R."/>
            <person name="Wang J."/>
            <person name="Yu J."/>
        </authorList>
    </citation>
    <scope>NUCLEOTIDE SEQUENCE [LARGE SCALE GENOMIC DNA]</scope>
    <source>
        <strain>98HAH33</strain>
    </source>
</reference>
<accession>A4W4B5</accession>